<comment type="function">
    <text evidence="1">Necessary for efficient RNA polymerase transcription elongation past template-encoded arresting sites. The arresting sites in DNA have the property of trapping a certain fraction of elongating RNA polymerases that pass through, resulting in locked ternary complexes. Cleavage of the nascent transcript by cleavage factors such as GreA or GreB allows the resumption of elongation from the new 3'terminus. GreA releases sequences of 2 to 3 nucleotides.</text>
</comment>
<comment type="similarity">
    <text evidence="1">Belongs to the GreA/GreB family.</text>
</comment>
<evidence type="ECO:0000255" key="1">
    <source>
        <dbReference type="HAMAP-Rule" id="MF_00105"/>
    </source>
</evidence>
<evidence type="ECO:0000256" key="2">
    <source>
        <dbReference type="SAM" id="MobiDB-lite"/>
    </source>
</evidence>
<reference key="1">
    <citation type="journal article" date="2010" name="J. Bacteriol.">
        <title>The genome of the amoeba symbiont 'Candidatus Amoebophilus asiaticus' reveals common mechanisms for host cell interaction among amoeba-associated bacteria.</title>
        <authorList>
            <person name="Schmitz-Esser S."/>
            <person name="Tischler P."/>
            <person name="Arnold R."/>
            <person name="Montanaro J."/>
            <person name="Wagner M."/>
            <person name="Rattei T."/>
            <person name="Horn M."/>
        </authorList>
    </citation>
    <scope>NUCLEOTIDE SEQUENCE [LARGE SCALE GENOMIC DNA]</scope>
    <source>
        <strain>5a2</strain>
    </source>
</reference>
<name>GREA_AMOA5</name>
<keyword id="KW-0175">Coiled coil</keyword>
<keyword id="KW-0238">DNA-binding</keyword>
<keyword id="KW-1185">Reference proteome</keyword>
<keyword id="KW-0804">Transcription</keyword>
<keyword id="KW-0805">Transcription regulation</keyword>
<gene>
    <name evidence="1" type="primary">greA</name>
    <name type="ordered locus">Aasi_0733</name>
</gene>
<proteinExistence type="inferred from homology"/>
<feature type="chain" id="PRO_1000094147" description="Transcription elongation factor GreA">
    <location>
        <begin position="1"/>
        <end position="157"/>
    </location>
</feature>
<feature type="region of interest" description="Disordered" evidence="2">
    <location>
        <begin position="25"/>
        <end position="47"/>
    </location>
</feature>
<feature type="coiled-coil region" evidence="1">
    <location>
        <begin position="43"/>
        <end position="79"/>
    </location>
</feature>
<feature type="compositionally biased region" description="Basic and acidic residues" evidence="2">
    <location>
        <begin position="25"/>
        <end position="43"/>
    </location>
</feature>
<accession>B3ESB4</accession>
<organism>
    <name type="scientific">Amoebophilus asiaticus (strain 5a2)</name>
    <dbReference type="NCBI Taxonomy" id="452471"/>
    <lineage>
        <taxon>Bacteria</taxon>
        <taxon>Pseudomonadati</taxon>
        <taxon>Bacteroidota</taxon>
        <taxon>Cytophagia</taxon>
        <taxon>Cytophagales</taxon>
        <taxon>Amoebophilaceae</taxon>
        <taxon>Candidatus Amoebophilus</taxon>
    </lineage>
</organism>
<sequence>MEKVSYYTEEGLQRLKGELTQLKSEGRAKVAEQLSEARDKGDLSENAEYDAAKEAQEILERRIAKLEELMINARVINKDNINTSAVSILSKVKIKNKKLGKVSTYTMVSEEEADLKEGKISIESPIGKGLLGKKAGEVAIVEAPAGKIEFEILDISF</sequence>
<protein>
    <recommendedName>
        <fullName evidence="1">Transcription elongation factor GreA</fullName>
    </recommendedName>
    <alternativeName>
        <fullName evidence="1">Transcript cleavage factor GreA</fullName>
    </alternativeName>
</protein>
<dbReference type="EMBL" id="CP001102">
    <property type="protein sequence ID" value="ACE06116.1"/>
    <property type="molecule type" value="Genomic_DNA"/>
</dbReference>
<dbReference type="RefSeq" id="WP_012472888.1">
    <property type="nucleotide sequence ID" value="NC_010830.1"/>
</dbReference>
<dbReference type="SMR" id="B3ESB4"/>
<dbReference type="STRING" id="452471.Aasi_0733"/>
<dbReference type="KEGG" id="aas:Aasi_0733"/>
<dbReference type="eggNOG" id="COG0782">
    <property type="taxonomic scope" value="Bacteria"/>
</dbReference>
<dbReference type="HOGENOM" id="CLU_101379_2_0_10"/>
<dbReference type="OrthoDB" id="9808774at2"/>
<dbReference type="Proteomes" id="UP000001227">
    <property type="component" value="Chromosome"/>
</dbReference>
<dbReference type="GO" id="GO:0003677">
    <property type="term" value="F:DNA binding"/>
    <property type="evidence" value="ECO:0007669"/>
    <property type="project" value="UniProtKB-UniRule"/>
</dbReference>
<dbReference type="GO" id="GO:0070063">
    <property type="term" value="F:RNA polymerase binding"/>
    <property type="evidence" value="ECO:0007669"/>
    <property type="project" value="InterPro"/>
</dbReference>
<dbReference type="GO" id="GO:0006354">
    <property type="term" value="P:DNA-templated transcription elongation"/>
    <property type="evidence" value="ECO:0007669"/>
    <property type="project" value="TreeGrafter"/>
</dbReference>
<dbReference type="GO" id="GO:0032784">
    <property type="term" value="P:regulation of DNA-templated transcription elongation"/>
    <property type="evidence" value="ECO:0007669"/>
    <property type="project" value="UniProtKB-UniRule"/>
</dbReference>
<dbReference type="FunFam" id="1.10.287.180:FF:000001">
    <property type="entry name" value="Transcription elongation factor GreA"/>
    <property type="match status" value="1"/>
</dbReference>
<dbReference type="FunFam" id="3.10.50.30:FF:000001">
    <property type="entry name" value="Transcription elongation factor GreA"/>
    <property type="match status" value="1"/>
</dbReference>
<dbReference type="Gene3D" id="3.10.50.30">
    <property type="entry name" value="Transcription elongation factor, GreA/GreB, C-terminal domain"/>
    <property type="match status" value="1"/>
</dbReference>
<dbReference type="Gene3D" id="1.10.287.180">
    <property type="entry name" value="Transcription elongation factor, GreA/GreB, N-terminal domain"/>
    <property type="match status" value="1"/>
</dbReference>
<dbReference type="HAMAP" id="MF_00105">
    <property type="entry name" value="GreA_GreB"/>
    <property type="match status" value="1"/>
</dbReference>
<dbReference type="InterPro" id="IPR036953">
    <property type="entry name" value="GreA/GreB_C_sf"/>
</dbReference>
<dbReference type="InterPro" id="IPR018151">
    <property type="entry name" value="TF_GreA/GreB_CS"/>
</dbReference>
<dbReference type="InterPro" id="IPR006359">
    <property type="entry name" value="Tscrpt_elong_fac_GreA"/>
</dbReference>
<dbReference type="InterPro" id="IPR028624">
    <property type="entry name" value="Tscrpt_elong_fac_GreA/B"/>
</dbReference>
<dbReference type="InterPro" id="IPR001437">
    <property type="entry name" value="Tscrpt_elong_fac_GreA/B_C"/>
</dbReference>
<dbReference type="InterPro" id="IPR023459">
    <property type="entry name" value="Tscrpt_elong_fac_GreA/B_fam"/>
</dbReference>
<dbReference type="InterPro" id="IPR022691">
    <property type="entry name" value="Tscrpt_elong_fac_GreA/B_N"/>
</dbReference>
<dbReference type="InterPro" id="IPR036805">
    <property type="entry name" value="Tscrpt_elong_fac_GreA/B_N_sf"/>
</dbReference>
<dbReference type="NCBIfam" id="TIGR01462">
    <property type="entry name" value="greA"/>
    <property type="match status" value="1"/>
</dbReference>
<dbReference type="NCBIfam" id="NF001263">
    <property type="entry name" value="PRK00226.1-4"/>
    <property type="match status" value="1"/>
</dbReference>
<dbReference type="PANTHER" id="PTHR30437">
    <property type="entry name" value="TRANSCRIPTION ELONGATION FACTOR GREA"/>
    <property type="match status" value="1"/>
</dbReference>
<dbReference type="PANTHER" id="PTHR30437:SF4">
    <property type="entry name" value="TRANSCRIPTION ELONGATION FACTOR GREA"/>
    <property type="match status" value="1"/>
</dbReference>
<dbReference type="Pfam" id="PF01272">
    <property type="entry name" value="GreA_GreB"/>
    <property type="match status" value="1"/>
</dbReference>
<dbReference type="Pfam" id="PF03449">
    <property type="entry name" value="GreA_GreB_N"/>
    <property type="match status" value="1"/>
</dbReference>
<dbReference type="PIRSF" id="PIRSF006092">
    <property type="entry name" value="GreA_GreB"/>
    <property type="match status" value="1"/>
</dbReference>
<dbReference type="SUPFAM" id="SSF54534">
    <property type="entry name" value="FKBP-like"/>
    <property type="match status" value="1"/>
</dbReference>
<dbReference type="SUPFAM" id="SSF46557">
    <property type="entry name" value="GreA transcript cleavage protein, N-terminal domain"/>
    <property type="match status" value="1"/>
</dbReference>
<dbReference type="PROSITE" id="PS00829">
    <property type="entry name" value="GREAB_1"/>
    <property type="match status" value="1"/>
</dbReference>
<dbReference type="PROSITE" id="PS00830">
    <property type="entry name" value="GREAB_2"/>
    <property type="match status" value="1"/>
</dbReference>